<reference key="1">
    <citation type="journal article" date="2000" name="Nature">
        <title>Sequence and analysis of chromosome 5 of the plant Arabidopsis thaliana.</title>
        <authorList>
            <person name="Tabata S."/>
            <person name="Kaneko T."/>
            <person name="Nakamura Y."/>
            <person name="Kotani H."/>
            <person name="Kato T."/>
            <person name="Asamizu E."/>
            <person name="Miyajima N."/>
            <person name="Sasamoto S."/>
            <person name="Kimura T."/>
            <person name="Hosouchi T."/>
            <person name="Kawashima K."/>
            <person name="Kohara M."/>
            <person name="Matsumoto M."/>
            <person name="Matsuno A."/>
            <person name="Muraki A."/>
            <person name="Nakayama S."/>
            <person name="Nakazaki N."/>
            <person name="Naruo K."/>
            <person name="Okumura S."/>
            <person name="Shinpo S."/>
            <person name="Takeuchi C."/>
            <person name="Wada T."/>
            <person name="Watanabe A."/>
            <person name="Yamada M."/>
            <person name="Yasuda M."/>
            <person name="Sato S."/>
            <person name="de la Bastide M."/>
            <person name="Huang E."/>
            <person name="Spiegel L."/>
            <person name="Gnoj L."/>
            <person name="O'Shaughnessy A."/>
            <person name="Preston R."/>
            <person name="Habermann K."/>
            <person name="Murray J."/>
            <person name="Johnson D."/>
            <person name="Rohlfing T."/>
            <person name="Nelson J."/>
            <person name="Stoneking T."/>
            <person name="Pepin K."/>
            <person name="Spieth J."/>
            <person name="Sekhon M."/>
            <person name="Armstrong J."/>
            <person name="Becker M."/>
            <person name="Belter E."/>
            <person name="Cordum H."/>
            <person name="Cordes M."/>
            <person name="Courtney L."/>
            <person name="Courtney W."/>
            <person name="Dante M."/>
            <person name="Du H."/>
            <person name="Edwards J."/>
            <person name="Fryman J."/>
            <person name="Haakensen B."/>
            <person name="Lamar E."/>
            <person name="Latreille P."/>
            <person name="Leonard S."/>
            <person name="Meyer R."/>
            <person name="Mulvaney E."/>
            <person name="Ozersky P."/>
            <person name="Riley A."/>
            <person name="Strowmatt C."/>
            <person name="Wagner-McPherson C."/>
            <person name="Wollam A."/>
            <person name="Yoakum M."/>
            <person name="Bell M."/>
            <person name="Dedhia N."/>
            <person name="Parnell L."/>
            <person name="Shah R."/>
            <person name="Rodriguez M."/>
            <person name="Hoon See L."/>
            <person name="Vil D."/>
            <person name="Baker J."/>
            <person name="Kirchoff K."/>
            <person name="Toth K."/>
            <person name="King L."/>
            <person name="Bahret A."/>
            <person name="Miller B."/>
            <person name="Marra M.A."/>
            <person name="Martienssen R."/>
            <person name="McCombie W.R."/>
            <person name="Wilson R.K."/>
            <person name="Murphy G."/>
            <person name="Bancroft I."/>
            <person name="Volckaert G."/>
            <person name="Wambutt R."/>
            <person name="Duesterhoeft A."/>
            <person name="Stiekema W."/>
            <person name="Pohl T."/>
            <person name="Entian K.-D."/>
            <person name="Terryn N."/>
            <person name="Hartley N."/>
            <person name="Bent E."/>
            <person name="Johnson S."/>
            <person name="Langham S.-A."/>
            <person name="McCullagh B."/>
            <person name="Robben J."/>
            <person name="Grymonprez B."/>
            <person name="Zimmermann W."/>
            <person name="Ramsperger U."/>
            <person name="Wedler H."/>
            <person name="Balke K."/>
            <person name="Wedler E."/>
            <person name="Peters S."/>
            <person name="van Staveren M."/>
            <person name="Dirkse W."/>
            <person name="Mooijman P."/>
            <person name="Klein Lankhorst R."/>
            <person name="Weitzenegger T."/>
            <person name="Bothe G."/>
            <person name="Rose M."/>
            <person name="Hauf J."/>
            <person name="Berneiser S."/>
            <person name="Hempel S."/>
            <person name="Feldpausch M."/>
            <person name="Lamberth S."/>
            <person name="Villarroel R."/>
            <person name="Gielen J."/>
            <person name="Ardiles W."/>
            <person name="Bents O."/>
            <person name="Lemcke K."/>
            <person name="Kolesov G."/>
            <person name="Mayer K.F.X."/>
            <person name="Rudd S."/>
            <person name="Schoof H."/>
            <person name="Schueller C."/>
            <person name="Zaccaria P."/>
            <person name="Mewes H.-W."/>
            <person name="Bevan M."/>
            <person name="Fransz P.F."/>
        </authorList>
    </citation>
    <scope>NUCLEOTIDE SEQUENCE [LARGE SCALE GENOMIC DNA]</scope>
    <source>
        <strain>cv. Columbia</strain>
    </source>
</reference>
<reference key="2">
    <citation type="journal article" date="2017" name="Plant J.">
        <title>Araport11: a complete reannotation of the Arabidopsis thaliana reference genome.</title>
        <authorList>
            <person name="Cheng C.Y."/>
            <person name="Krishnakumar V."/>
            <person name="Chan A.P."/>
            <person name="Thibaud-Nissen F."/>
            <person name="Schobel S."/>
            <person name="Town C.D."/>
        </authorList>
    </citation>
    <scope>GENOME REANNOTATION</scope>
    <source>
        <strain>cv. Columbia</strain>
    </source>
</reference>
<reference key="3">
    <citation type="journal article" date="2009" name="Plant Physiol.">
        <title>Large-scale Arabidopsis phosphoproteome profiling reveals novel chloroplast kinase substrates and phosphorylation networks.</title>
        <authorList>
            <person name="Reiland S."/>
            <person name="Messerli G."/>
            <person name="Baerenfaller K."/>
            <person name="Gerrits B."/>
            <person name="Endler A."/>
            <person name="Grossmann J."/>
            <person name="Gruissem W."/>
            <person name="Baginsky S."/>
        </authorList>
    </citation>
    <scope>PHOSPHORYLATION [LARGE SCALE ANALYSIS] AT SER-298</scope>
    <scope>IDENTIFICATION BY MASS SPECTROMETRY [LARGE SCALE ANALYSIS]</scope>
</reference>
<reference key="4">
    <citation type="journal article" date="2010" name="PLoS ONE">
        <title>In silico identification of carboxylate clamp type tetratricopeptide repeat proteins in Arabidopsis and rice as putative co-chaperones of Hsp90/Hsp70.</title>
        <authorList>
            <person name="Prasad B.D."/>
            <person name="Goel S."/>
            <person name="Krishna P."/>
        </authorList>
    </citation>
    <scope>GENE FAMILY</scope>
    <scope>NOMENCLATURE</scope>
    <scope>FUNCTION</scope>
    <scope>INDUCTION</scope>
</reference>
<reference key="5">
    <citation type="journal article" date="2017" name="Proc. Natl. Acad. Sci. U.S.A.">
        <title>Myosin-driven transport network in plants.</title>
        <authorList>
            <person name="Kurth E.G."/>
            <person name="Peremyslov V.V."/>
            <person name="Turner H.L."/>
            <person name="Makarova K.S."/>
            <person name="Iranzo J."/>
            <person name="Mekhedov S.L."/>
            <person name="Koonin E.V."/>
            <person name="Dolja V.V."/>
        </authorList>
    </citation>
    <scope>FUNCTION</scope>
    <scope>DISRUPTION PHENOTYPE</scope>
</reference>
<evidence type="ECO:0000255" key="1"/>
<evidence type="ECO:0000255" key="2">
    <source>
        <dbReference type="PROSITE-ProRule" id="PRU00339"/>
    </source>
</evidence>
<evidence type="ECO:0000255" key="3">
    <source>
        <dbReference type="PROSITE-ProRule" id="PRU01081"/>
    </source>
</evidence>
<evidence type="ECO:0000256" key="4">
    <source>
        <dbReference type="SAM" id="MobiDB-lite"/>
    </source>
</evidence>
<evidence type="ECO:0000269" key="5">
    <source>
    </source>
</evidence>
<evidence type="ECO:0000269" key="6">
    <source>
    </source>
</evidence>
<evidence type="ECO:0000303" key="7">
    <source>
    </source>
</evidence>
<evidence type="ECO:0000305" key="8"/>
<evidence type="ECO:0000305" key="9">
    <source>
    </source>
</evidence>
<evidence type="ECO:0000312" key="10">
    <source>
        <dbReference type="Araport" id="AT5G20360"/>
    </source>
</evidence>
<evidence type="ECO:0000312" key="11">
    <source>
        <dbReference type="EMBL" id="AED92835.1"/>
    </source>
</evidence>
<evidence type="ECO:0007744" key="12">
    <source>
    </source>
</evidence>
<proteinExistence type="evidence at protein level"/>
<comment type="function">
    <text evidence="6 9">Carboxylate clamp type tetratricopeptide repeat protein that may act as a potential Hsp90/Hsp70 co-chaperone (PubMed:20856808). Contributes to polar growth of root hairs (PubMed:28096376).</text>
</comment>
<comment type="alternative products">
    <event type="alternative splicing"/>
    <isoform>
        <id>F4K487-1</id>
        <name>1</name>
        <sequence type="displayed"/>
    </isoform>
    <text evidence="8">A number of isoforms are produced.</text>
</comment>
<comment type="induction">
    <text evidence="5">Up-regulated by abscisic acid treatment, and by cold and salt stress.</text>
</comment>
<comment type="disruption phenotype">
    <text evidence="6">Phox1, phox3 and phox4 triple mutants and phox1, phox2, phox3 and phox4 quadruple mutants show a 70% reduction in root hair growth (PubMed:28096376).</text>
</comment>
<gene>
    <name evidence="7" type="primary">PHOX3</name>
    <name evidence="10" type="ordered locus">At5g20360</name>
    <name evidence="11" type="ORF">F5O24.250</name>
</gene>
<accession>F4K487</accession>
<name>PHOX3_ARATH</name>
<feature type="chain" id="PRO_0000440021" description="Protein PHOX3">
    <location>
        <begin position="1"/>
        <end position="809"/>
    </location>
</feature>
<feature type="repeat" description="TPR 1" evidence="1 2">
    <location>
        <begin position="126"/>
        <end position="159"/>
    </location>
</feature>
<feature type="repeat" description="TPR 2" evidence="1">
    <location>
        <begin position="164"/>
        <end position="199"/>
    </location>
</feature>
<feature type="repeat" description="TPR 3" evidence="2">
    <location>
        <begin position="200"/>
        <end position="233"/>
    </location>
</feature>
<feature type="repeat" description="TPR 4" evidence="1">
    <location>
        <begin position="235"/>
        <end position="265"/>
    </location>
</feature>
<feature type="repeat" description="TPR 5" evidence="1">
    <location>
        <begin position="274"/>
        <end position="311"/>
    </location>
</feature>
<feature type="domain" description="PB1" evidence="3">
    <location>
        <begin position="359"/>
        <end position="438"/>
    </location>
</feature>
<feature type="repeat" description="TPR 6" evidence="1">
    <location>
        <begin position="508"/>
        <end position="541"/>
    </location>
</feature>
<feature type="repeat" description="TPR 7" evidence="1">
    <location>
        <begin position="563"/>
        <end position="597"/>
    </location>
</feature>
<feature type="repeat" description="TPR 8" evidence="1">
    <location>
        <begin position="615"/>
        <end position="648"/>
    </location>
</feature>
<feature type="repeat" description="TPR 9" evidence="1">
    <location>
        <begin position="709"/>
        <end position="741"/>
    </location>
</feature>
<feature type="region of interest" description="Disordered" evidence="4">
    <location>
        <begin position="1"/>
        <end position="22"/>
    </location>
</feature>
<feature type="region of interest" description="Disordered" evidence="4">
    <location>
        <begin position="288"/>
        <end position="339"/>
    </location>
</feature>
<feature type="region of interest" description="Disordered" evidence="4">
    <location>
        <begin position="656"/>
        <end position="686"/>
    </location>
</feature>
<feature type="compositionally biased region" description="Basic and acidic residues" evidence="4">
    <location>
        <begin position="307"/>
        <end position="339"/>
    </location>
</feature>
<feature type="modified residue" description="Phosphoserine" evidence="12">
    <location>
        <position position="298"/>
    </location>
</feature>
<organism>
    <name type="scientific">Arabidopsis thaliana</name>
    <name type="common">Mouse-ear cress</name>
    <dbReference type="NCBI Taxonomy" id="3702"/>
    <lineage>
        <taxon>Eukaryota</taxon>
        <taxon>Viridiplantae</taxon>
        <taxon>Streptophyta</taxon>
        <taxon>Embryophyta</taxon>
        <taxon>Tracheophyta</taxon>
        <taxon>Spermatophyta</taxon>
        <taxon>Magnoliopsida</taxon>
        <taxon>eudicotyledons</taxon>
        <taxon>Gunneridae</taxon>
        <taxon>Pentapetalae</taxon>
        <taxon>rosids</taxon>
        <taxon>malvids</taxon>
        <taxon>Brassicales</taxon>
        <taxon>Brassicaceae</taxon>
        <taxon>Camelineae</taxon>
        <taxon>Arabidopsis</taxon>
    </lineage>
</organism>
<keyword id="KW-0025">Alternative splicing</keyword>
<keyword id="KW-0597">Phosphoprotein</keyword>
<keyword id="KW-1185">Reference proteome</keyword>
<keyword id="KW-0677">Repeat</keyword>
<keyword id="KW-0802">TPR repeat</keyword>
<dbReference type="EMBL" id="AF296825">
    <property type="status" value="NOT_ANNOTATED_CDS"/>
    <property type="molecule type" value="Genomic_DNA"/>
</dbReference>
<dbReference type="EMBL" id="CP002688">
    <property type="protein sequence ID" value="AED92835.1"/>
    <property type="molecule type" value="Genomic_DNA"/>
</dbReference>
<dbReference type="EMBL" id="CP002688">
    <property type="protein sequence ID" value="ANM71141.1"/>
    <property type="molecule type" value="Genomic_DNA"/>
</dbReference>
<dbReference type="RefSeq" id="NP_001332690.1">
    <molecule id="F4K487-1"/>
    <property type="nucleotide sequence ID" value="NM_001343653.1"/>
</dbReference>
<dbReference type="RefSeq" id="NP_197536.1">
    <molecule id="F4K487-1"/>
    <property type="nucleotide sequence ID" value="NM_122043.3"/>
</dbReference>
<dbReference type="SMR" id="F4K487"/>
<dbReference type="FunCoup" id="F4K487">
    <property type="interactions" value="44"/>
</dbReference>
<dbReference type="STRING" id="3702.F4K487"/>
<dbReference type="iPTMnet" id="F4K487"/>
<dbReference type="PaxDb" id="3702-AT5G20360.1"/>
<dbReference type="ProteomicsDB" id="234720">
    <molecule id="F4K487-1"/>
</dbReference>
<dbReference type="EnsemblPlants" id="AT5G20360.1">
    <molecule id="F4K487-1"/>
    <property type="protein sequence ID" value="AT5G20360.1"/>
    <property type="gene ID" value="AT5G20360"/>
</dbReference>
<dbReference type="EnsemblPlants" id="AT5G20360.2">
    <molecule id="F4K487-1"/>
    <property type="protein sequence ID" value="AT5G20360.2"/>
    <property type="gene ID" value="AT5G20360"/>
</dbReference>
<dbReference type="GeneID" id="832158"/>
<dbReference type="Gramene" id="AT5G20360.1">
    <molecule id="F4K487-1"/>
    <property type="protein sequence ID" value="AT5G20360.1"/>
    <property type="gene ID" value="AT5G20360"/>
</dbReference>
<dbReference type="Gramene" id="AT5G20360.2">
    <molecule id="F4K487-1"/>
    <property type="protein sequence ID" value="AT5G20360.2"/>
    <property type="gene ID" value="AT5G20360"/>
</dbReference>
<dbReference type="KEGG" id="ath:AT5G20360"/>
<dbReference type="Araport" id="AT5G20360"/>
<dbReference type="TAIR" id="AT5G20360">
    <property type="gene designation" value="PHOX3"/>
</dbReference>
<dbReference type="eggNOG" id="KOG4151">
    <property type="taxonomic scope" value="Eukaryota"/>
</dbReference>
<dbReference type="HOGENOM" id="CLU_014258_0_0_1"/>
<dbReference type="InParanoid" id="F4K487"/>
<dbReference type="PhylomeDB" id="F4K487"/>
<dbReference type="PRO" id="PR:F4K487"/>
<dbReference type="Proteomes" id="UP000006548">
    <property type="component" value="Chromosome 5"/>
</dbReference>
<dbReference type="ExpressionAtlas" id="F4K487">
    <property type="expression patterns" value="baseline and differential"/>
</dbReference>
<dbReference type="CDD" id="cd05992">
    <property type="entry name" value="PB1"/>
    <property type="match status" value="1"/>
</dbReference>
<dbReference type="Gene3D" id="3.10.20.90">
    <property type="entry name" value="Phosphatidylinositol 3-kinase Catalytic Subunit, Chain A, domain 1"/>
    <property type="match status" value="1"/>
</dbReference>
<dbReference type="Gene3D" id="1.25.40.10">
    <property type="entry name" value="Tetratricopeptide repeat domain"/>
    <property type="match status" value="1"/>
</dbReference>
<dbReference type="InterPro" id="IPR053793">
    <property type="entry name" value="PB1-like"/>
</dbReference>
<dbReference type="InterPro" id="IPR000270">
    <property type="entry name" value="PB1_dom"/>
</dbReference>
<dbReference type="InterPro" id="IPR044517">
    <property type="entry name" value="PHOX1-4"/>
</dbReference>
<dbReference type="InterPro" id="IPR011990">
    <property type="entry name" value="TPR-like_helical_dom_sf"/>
</dbReference>
<dbReference type="InterPro" id="IPR019734">
    <property type="entry name" value="TPR_rpt"/>
</dbReference>
<dbReference type="PANTHER" id="PTHR46183">
    <property type="entry name" value="PROTEIN CLMP1"/>
    <property type="match status" value="1"/>
</dbReference>
<dbReference type="PANTHER" id="PTHR46183:SF16">
    <property type="entry name" value="PROTEIN PHOX3"/>
    <property type="match status" value="1"/>
</dbReference>
<dbReference type="Pfam" id="PF00564">
    <property type="entry name" value="PB1"/>
    <property type="match status" value="1"/>
</dbReference>
<dbReference type="SMART" id="SM00666">
    <property type="entry name" value="PB1"/>
    <property type="match status" value="1"/>
</dbReference>
<dbReference type="SMART" id="SM00028">
    <property type="entry name" value="TPR"/>
    <property type="match status" value="4"/>
</dbReference>
<dbReference type="SUPFAM" id="SSF54277">
    <property type="entry name" value="CAD &amp; PB1 domains"/>
    <property type="match status" value="1"/>
</dbReference>
<dbReference type="SUPFAM" id="SSF48452">
    <property type="entry name" value="TPR-like"/>
    <property type="match status" value="1"/>
</dbReference>
<dbReference type="PROSITE" id="PS51745">
    <property type="entry name" value="PB1"/>
    <property type="match status" value="1"/>
</dbReference>
<dbReference type="PROSITE" id="PS50005">
    <property type="entry name" value="TPR"/>
    <property type="match status" value="2"/>
</dbReference>
<dbReference type="PROSITE" id="PS50293">
    <property type="entry name" value="TPR_REGION"/>
    <property type="match status" value="1"/>
</dbReference>
<protein>
    <recommendedName>
        <fullName evidence="7">Protein PHOX3</fullName>
    </recommendedName>
</protein>
<sequence>MEKQNEEISTDDAETSQSQLVDDSKVETLDDCVSKVETLDDCVSKVETLDDCVSKAETLADCVSKVETLDDCVSKVKTLDDCVSKVENLDDCVPKVETLDDCVPKVETLDDCVSEVETLDDCVSKAQGLKEEGNKLFQKRDYDGAMFKYGEAIKILPKDHVEVSHVRANVASCYMQLEPGEFAKAIHECDLALSVTPDHNKALLKRARCYEALNKLDLALRDVCMVSKLDPKNPMASEIVEKLKRTLESKGLRINNSVIELPPDYVEPVGASPAALWAKLGKVRVKKTKKSNQVEEKSEGEGEDVEPEKKNNVLAEKGKEKIKMKVKGKQSDKRSDTSKEQEKVIIEEELLVIGVEDVNKDVKFVYSDDIRLAELPINCTLFKLREVVHERFPSLRAVHIKYRDQEGDLVTITTDEELRMSEVSSRSQGTMRFYVVEVSPEQDPFFGRLVEMKKLKITADSFKAKVNGRGGCKVEDWMIEFAHLFKIQARIDSDRCLNLQELGMKLNSEAMEEVVTSDAAQGPFDRAAQQFQEVAARSLLNLGYVHMSGARKRLSLLQGVSGESVSEQVKTAYECAKKEHANAKEKYEEAMKIKPECFEVFLALGLQQFEEARLSWYYVLVSHLDLKTWPYADVVQFYQSAESNIKKSMEVLENLETGKESEPSQAGKTDCLTHEKDLGSSTQNNPAKEAGRLKSWIDILLCAVLYERSIMEYKLDQPFWRESLEAAMEKFELAGTCKDDVVEIISEDYVAGNTLRDIRFHMEEIIQIFDEIYEAKHWTNGIPSDQLEEILKRRAENIFHVPNIAIQRG</sequence>